<reference key="1">
    <citation type="journal article" date="2004" name="Genome Res.">
        <title>The status, quality, and expansion of the NIH full-length cDNA project: the Mammalian Gene Collection (MGC).</title>
        <authorList>
            <consortium name="The MGC Project Team"/>
        </authorList>
    </citation>
    <scope>NUCLEOTIDE SEQUENCE [LARGE SCALE MRNA]</scope>
    <source>
        <tissue>Pancreas</tissue>
    </source>
</reference>
<reference key="2">
    <citation type="journal article" date="2003" name="J. Biol. Chem.">
        <title>Distinct Rab binding specificity of Rim1, Rim2, rabphilin, and Noc2. Identification of a critical determinant of Rab3A/Rab27A recognition by Rim2.</title>
        <authorList>
            <person name="Fukuda M."/>
        </authorList>
    </citation>
    <scope>INTERACTION WITH RIMS1</scope>
</reference>
<reference key="3">
    <citation type="journal article" date="2010" name="Mol. Cell. Biol.">
        <title>RAB26 and RAB3D are direct transcriptional targets of MIST1 that regulate exocrine granule maturation.</title>
        <authorList>
            <person name="Tian X."/>
            <person name="Jin R.U."/>
            <person name="Bredemeyer A.J."/>
            <person name="Oates E.J."/>
            <person name="Blazewska K.M."/>
            <person name="McKenna C.E."/>
            <person name="Mills J.C."/>
        </authorList>
    </citation>
    <scope>SUBCELLULAR LOCATION</scope>
    <scope>TISSUE SPECIFICITY</scope>
</reference>
<feature type="chain" id="PRO_0000121219" description="Ras-related protein Rab-26">
    <location>
        <begin position="1"/>
        <end position="260"/>
    </location>
</feature>
<feature type="region of interest" description="Disordered" evidence="6">
    <location>
        <begin position="1"/>
        <end position="56"/>
    </location>
</feature>
<feature type="short sequence motif" description="Switch 1" evidence="4">
    <location>
        <begin position="90"/>
        <end position="105"/>
    </location>
</feature>
<feature type="short sequence motif" description="Switch 2" evidence="4">
    <location>
        <begin position="123"/>
        <end position="140"/>
    </location>
</feature>
<feature type="binding site" evidence="5">
    <location>
        <position position="76"/>
    </location>
    <ligand>
        <name>GTP</name>
        <dbReference type="ChEBI" id="CHEBI:37565"/>
    </ligand>
</feature>
<feature type="binding site" evidence="3">
    <location>
        <position position="77"/>
    </location>
    <ligand>
        <name>GTP</name>
        <dbReference type="ChEBI" id="CHEBI:37565"/>
    </ligand>
</feature>
<feature type="binding site" evidence="3">
    <location>
        <position position="78"/>
    </location>
    <ligand>
        <name>GTP</name>
        <dbReference type="ChEBI" id="CHEBI:37565"/>
    </ligand>
</feature>
<feature type="binding site" evidence="5">
    <location>
        <position position="79"/>
    </location>
    <ligand>
        <name>GTP</name>
        <dbReference type="ChEBI" id="CHEBI:37565"/>
    </ligand>
</feature>
<feature type="binding site" evidence="5">
    <location>
        <position position="80"/>
    </location>
    <ligand>
        <name>GTP</name>
        <dbReference type="ChEBI" id="CHEBI:37565"/>
    </ligand>
</feature>
<feature type="binding site" evidence="5">
    <location>
        <position position="81"/>
    </location>
    <ligand>
        <name>GTP</name>
        <dbReference type="ChEBI" id="CHEBI:37565"/>
    </ligand>
</feature>
<feature type="binding site" evidence="5">
    <location>
        <position position="81"/>
    </location>
    <ligand>
        <name>Mg(2+)</name>
        <dbReference type="ChEBI" id="CHEBI:18420"/>
    </ligand>
</feature>
<feature type="binding site" evidence="5">
    <location>
        <position position="82"/>
    </location>
    <ligand>
        <name>GTP</name>
        <dbReference type="ChEBI" id="CHEBI:37565"/>
    </ligand>
</feature>
<feature type="binding site" evidence="3">
    <location>
        <position position="99"/>
    </location>
    <ligand>
        <name>GTP</name>
        <dbReference type="ChEBI" id="CHEBI:37565"/>
    </ligand>
</feature>
<feature type="binding site" evidence="5">
    <location>
        <position position="100"/>
    </location>
    <ligand>
        <name>GTP</name>
        <dbReference type="ChEBI" id="CHEBI:37565"/>
    </ligand>
</feature>
<feature type="binding site" evidence="5">
    <location>
        <position position="100"/>
    </location>
    <ligand>
        <name>Mg(2+)</name>
        <dbReference type="ChEBI" id="CHEBI:18420"/>
    </ligand>
</feature>
<feature type="binding site" evidence="3">
    <location>
        <position position="123"/>
    </location>
    <ligand>
        <name>Mg(2+)</name>
        <dbReference type="ChEBI" id="CHEBI:18420"/>
    </ligand>
</feature>
<feature type="binding site" evidence="5">
    <location>
        <position position="126"/>
    </location>
    <ligand>
        <name>GTP</name>
        <dbReference type="ChEBI" id="CHEBI:37565"/>
    </ligand>
</feature>
<feature type="binding site" evidence="5">
    <location>
        <position position="181"/>
    </location>
    <ligand>
        <name>GTP</name>
        <dbReference type="ChEBI" id="CHEBI:37565"/>
    </ligand>
</feature>
<feature type="binding site" evidence="5">
    <location>
        <position position="182"/>
    </location>
    <ligand>
        <name>GTP</name>
        <dbReference type="ChEBI" id="CHEBI:37565"/>
    </ligand>
</feature>
<feature type="binding site" evidence="5">
    <location>
        <position position="184"/>
    </location>
    <ligand>
        <name>GTP</name>
        <dbReference type="ChEBI" id="CHEBI:37565"/>
    </ligand>
</feature>
<feature type="binding site" evidence="5">
    <location>
        <position position="212"/>
    </location>
    <ligand>
        <name>GTP</name>
        <dbReference type="ChEBI" id="CHEBI:37565"/>
    </ligand>
</feature>
<feature type="binding site" evidence="5">
    <location>
        <position position="213"/>
    </location>
    <ligand>
        <name>GTP</name>
        <dbReference type="ChEBI" id="CHEBI:37565"/>
    </ligand>
</feature>
<feature type="lipid moiety-binding region" description="S-geranylgeranyl cysteine" evidence="1">
    <location>
        <position position="257"/>
    </location>
</feature>
<feature type="lipid moiety-binding region" description="S-geranylgeranyl cysteine" evidence="1">
    <location>
        <position position="258"/>
    </location>
</feature>
<dbReference type="EC" id="3.6.5.2" evidence="3"/>
<dbReference type="EMBL" id="BC094931">
    <property type="protein sequence ID" value="AAH94931.1"/>
    <property type="molecule type" value="mRNA"/>
</dbReference>
<dbReference type="CCDS" id="CCDS50016.1"/>
<dbReference type="RefSeq" id="NP_796349.1">
    <property type="nucleotide sequence ID" value="NM_177375.2"/>
</dbReference>
<dbReference type="SMR" id="Q504M8"/>
<dbReference type="BioGRID" id="236652">
    <property type="interactions" value="2"/>
</dbReference>
<dbReference type="FunCoup" id="Q504M8">
    <property type="interactions" value="746"/>
</dbReference>
<dbReference type="IntAct" id="Q504M8">
    <property type="interactions" value="3"/>
</dbReference>
<dbReference type="MINT" id="Q504M8"/>
<dbReference type="STRING" id="10090.ENSMUSP00000046089"/>
<dbReference type="iPTMnet" id="Q504M8"/>
<dbReference type="PhosphoSitePlus" id="Q504M8"/>
<dbReference type="jPOST" id="Q504M8"/>
<dbReference type="PaxDb" id="10090-ENSMUSP00000046089"/>
<dbReference type="ProteomicsDB" id="300374"/>
<dbReference type="Antibodypedia" id="23581">
    <property type="antibodies" value="190 antibodies from 25 providers"/>
</dbReference>
<dbReference type="Ensembl" id="ENSMUST00000035797.16">
    <property type="protein sequence ID" value="ENSMUSP00000046089.10"/>
    <property type="gene ID" value="ENSMUSG00000079657.11"/>
</dbReference>
<dbReference type="GeneID" id="328778"/>
<dbReference type="KEGG" id="mmu:328778"/>
<dbReference type="UCSC" id="uc008awu.2">
    <property type="organism name" value="mouse"/>
</dbReference>
<dbReference type="AGR" id="MGI:2443284"/>
<dbReference type="CTD" id="25837"/>
<dbReference type="MGI" id="MGI:2443284">
    <property type="gene designation" value="Rab26"/>
</dbReference>
<dbReference type="VEuPathDB" id="HostDB:ENSMUSG00000079657"/>
<dbReference type="eggNOG" id="KOG0083">
    <property type="taxonomic scope" value="Eukaryota"/>
</dbReference>
<dbReference type="GeneTree" id="ENSGT00940000158558"/>
<dbReference type="HOGENOM" id="CLU_041217_10_1_1"/>
<dbReference type="InParanoid" id="Q504M8"/>
<dbReference type="OMA" id="QRSMKVP"/>
<dbReference type="OrthoDB" id="24573at9989"/>
<dbReference type="PhylomeDB" id="Q504M8"/>
<dbReference type="TreeFam" id="TF323428"/>
<dbReference type="Reactome" id="R-MMU-8873719">
    <property type="pathway name" value="RAB geranylgeranylation"/>
</dbReference>
<dbReference type="BioGRID-ORCS" id="328778">
    <property type="hits" value="3 hits in 78 CRISPR screens"/>
</dbReference>
<dbReference type="ChiTaRS" id="Rab26">
    <property type="organism name" value="mouse"/>
</dbReference>
<dbReference type="PRO" id="PR:Q504M8"/>
<dbReference type="Proteomes" id="UP000000589">
    <property type="component" value="Chromosome 17"/>
</dbReference>
<dbReference type="RNAct" id="Q504M8">
    <property type="molecule type" value="protein"/>
</dbReference>
<dbReference type="Bgee" id="ENSMUSG00000079657">
    <property type="expression patterns" value="Expressed in dentate gyrus of hippocampal formation granule cell and 88 other cell types or tissues"/>
</dbReference>
<dbReference type="ExpressionAtlas" id="Q504M8">
    <property type="expression patterns" value="baseline and differential"/>
</dbReference>
<dbReference type="GO" id="GO:0000139">
    <property type="term" value="C:Golgi membrane"/>
    <property type="evidence" value="ECO:0000250"/>
    <property type="project" value="UniProtKB"/>
</dbReference>
<dbReference type="GO" id="GO:0005886">
    <property type="term" value="C:plasma membrane"/>
    <property type="evidence" value="ECO:0000250"/>
    <property type="project" value="UniProtKB"/>
</dbReference>
<dbReference type="GO" id="GO:0030667">
    <property type="term" value="C:secretory granule membrane"/>
    <property type="evidence" value="ECO:0000314"/>
    <property type="project" value="UniProtKB"/>
</dbReference>
<dbReference type="GO" id="GO:0030672">
    <property type="term" value="C:synaptic vesicle membrane"/>
    <property type="evidence" value="ECO:0007669"/>
    <property type="project" value="Ensembl"/>
</dbReference>
<dbReference type="GO" id="GO:0019002">
    <property type="term" value="F:GMP binding"/>
    <property type="evidence" value="ECO:0000250"/>
    <property type="project" value="UniProtKB"/>
</dbReference>
<dbReference type="GO" id="GO:0005525">
    <property type="term" value="F:GTP binding"/>
    <property type="evidence" value="ECO:0000250"/>
    <property type="project" value="UniProtKB"/>
</dbReference>
<dbReference type="GO" id="GO:0003924">
    <property type="term" value="F:GTPase activity"/>
    <property type="evidence" value="ECO:0007669"/>
    <property type="project" value="InterPro"/>
</dbReference>
<dbReference type="GO" id="GO:0035272">
    <property type="term" value="P:exocrine system development"/>
    <property type="evidence" value="ECO:0000250"/>
    <property type="project" value="UniProtKB"/>
</dbReference>
<dbReference type="GO" id="GO:0043001">
    <property type="term" value="P:Golgi to plasma membrane protein transport"/>
    <property type="evidence" value="ECO:0000250"/>
    <property type="project" value="UniProtKB"/>
</dbReference>
<dbReference type="GO" id="GO:0045055">
    <property type="term" value="P:regulated exocytosis"/>
    <property type="evidence" value="ECO:0000250"/>
    <property type="project" value="UniProtKB"/>
</dbReference>
<dbReference type="GO" id="GO:0017157">
    <property type="term" value="P:regulation of exocytosis"/>
    <property type="evidence" value="ECO:0000250"/>
    <property type="project" value="UniProtKB"/>
</dbReference>
<dbReference type="GO" id="GO:0140251">
    <property type="term" value="P:regulation protein catabolic process at presynapse"/>
    <property type="evidence" value="ECO:0007669"/>
    <property type="project" value="Ensembl"/>
</dbReference>
<dbReference type="CDD" id="cd04112">
    <property type="entry name" value="Rab26"/>
    <property type="match status" value="1"/>
</dbReference>
<dbReference type="FunFam" id="3.40.50.300:FF:000459">
    <property type="entry name" value="ras-related protein Rab-37 isoform X1"/>
    <property type="match status" value="1"/>
</dbReference>
<dbReference type="Gene3D" id="3.40.50.300">
    <property type="entry name" value="P-loop containing nucleotide triphosphate hydrolases"/>
    <property type="match status" value="1"/>
</dbReference>
<dbReference type="InterPro" id="IPR027417">
    <property type="entry name" value="P-loop_NTPase"/>
</dbReference>
<dbReference type="InterPro" id="IPR005225">
    <property type="entry name" value="Small_GTP-bd"/>
</dbReference>
<dbReference type="InterPro" id="IPR001806">
    <property type="entry name" value="Small_GTPase"/>
</dbReference>
<dbReference type="InterPro" id="IPR050305">
    <property type="entry name" value="Small_GTPase_Rab"/>
</dbReference>
<dbReference type="NCBIfam" id="TIGR00231">
    <property type="entry name" value="small_GTP"/>
    <property type="match status" value="1"/>
</dbReference>
<dbReference type="PANTHER" id="PTHR47980">
    <property type="entry name" value="LD44762P"/>
    <property type="match status" value="1"/>
</dbReference>
<dbReference type="Pfam" id="PF00071">
    <property type="entry name" value="Ras"/>
    <property type="match status" value="1"/>
</dbReference>
<dbReference type="PRINTS" id="PR00449">
    <property type="entry name" value="RASTRNSFRMNG"/>
</dbReference>
<dbReference type="SMART" id="SM00177">
    <property type="entry name" value="ARF"/>
    <property type="match status" value="1"/>
</dbReference>
<dbReference type="SMART" id="SM00175">
    <property type="entry name" value="RAB"/>
    <property type="match status" value="1"/>
</dbReference>
<dbReference type="SMART" id="SM00176">
    <property type="entry name" value="RAN"/>
    <property type="match status" value="1"/>
</dbReference>
<dbReference type="SMART" id="SM00173">
    <property type="entry name" value="RAS"/>
    <property type="match status" value="1"/>
</dbReference>
<dbReference type="SMART" id="SM00174">
    <property type="entry name" value="RHO"/>
    <property type="match status" value="1"/>
</dbReference>
<dbReference type="SUPFAM" id="SSF52540">
    <property type="entry name" value="P-loop containing nucleoside triphosphate hydrolases"/>
    <property type="match status" value="1"/>
</dbReference>
<dbReference type="PROSITE" id="PS51419">
    <property type="entry name" value="RAB"/>
    <property type="match status" value="1"/>
</dbReference>
<protein>
    <recommendedName>
        <fullName>Ras-related protein Rab-26</fullName>
        <ecNumber evidence="3">3.6.5.2</ecNumber>
    </recommendedName>
</protein>
<evidence type="ECO:0000250" key="1"/>
<evidence type="ECO:0000250" key="2">
    <source>
        <dbReference type="UniProtKB" id="P51156"/>
    </source>
</evidence>
<evidence type="ECO:0000250" key="3">
    <source>
        <dbReference type="UniProtKB" id="P61006"/>
    </source>
</evidence>
<evidence type="ECO:0000250" key="4">
    <source>
        <dbReference type="UniProtKB" id="P62820"/>
    </source>
</evidence>
<evidence type="ECO:0000250" key="5">
    <source>
        <dbReference type="UniProtKB" id="Q9ULW5"/>
    </source>
</evidence>
<evidence type="ECO:0000256" key="6">
    <source>
        <dbReference type="SAM" id="MobiDB-lite"/>
    </source>
</evidence>
<evidence type="ECO:0000269" key="7">
    <source>
    </source>
</evidence>
<evidence type="ECO:0000269" key="8">
    <source>
    </source>
</evidence>
<evidence type="ECO:0000305" key="9"/>
<evidence type="ECO:0000305" key="10">
    <source>
    </source>
</evidence>
<evidence type="ECO:0000312" key="11">
    <source>
        <dbReference type="MGI" id="MGI:2443284"/>
    </source>
</evidence>
<comment type="function">
    <text evidence="2 3 5">The small GTPases Rab are key regulators of intracellular membrane trafficking, from the formation of transport vesicles to their fusion with membranes. Rabs cycle between an inactive GDP-bound form and an active GTP-bound form that is able to recruit to membranes different set of downstream effectors directly responsible for vesicle formation, movement, tethering and fusion (By similarity). RAB26 mediates transport of ADRA2A and ADRA2B from the Golgi to the cell membrane. Plays a role in the maturation of zymogenic granules and in pepsinogen secretion in the stomach (By similarity). Plays a role in the secretion of amylase from acinar granules in the parotid gland (By similarity).</text>
</comment>
<comment type="catalytic activity">
    <reaction evidence="3">
        <text>GTP + H2O = GDP + phosphate + H(+)</text>
        <dbReference type="Rhea" id="RHEA:19669"/>
        <dbReference type="ChEBI" id="CHEBI:15377"/>
        <dbReference type="ChEBI" id="CHEBI:15378"/>
        <dbReference type="ChEBI" id="CHEBI:37565"/>
        <dbReference type="ChEBI" id="CHEBI:43474"/>
        <dbReference type="ChEBI" id="CHEBI:58189"/>
        <dbReference type="EC" id="3.6.5.2"/>
    </reaction>
    <physiologicalReaction direction="left-to-right" evidence="3">
        <dbReference type="Rhea" id="RHEA:19670"/>
    </physiologicalReaction>
</comment>
<comment type="cofactor">
    <cofactor evidence="5">
        <name>Mg(2+)</name>
        <dbReference type="ChEBI" id="CHEBI:18420"/>
    </cofactor>
</comment>
<comment type="activity regulation">
    <text evidence="9">Regulated by guanine nucleotide exchange factors (GEFs) which promote the exchange of bound GDP for free GTP. Regulated by GTPase activating proteins (GAPs) which increase the GTP hydrolysis activity. Inhibited by GDP dissociation inhibitors (GDIs).</text>
</comment>
<comment type="subunit">
    <text evidence="1 7">Interacts with ADRA2B (By similarity). Interacts with RIMS1.</text>
</comment>
<comment type="subcellular location">
    <subcellularLocation>
        <location evidence="10">Cytoplasmic vesicle</location>
        <location evidence="10">Secretory vesicle membrane</location>
        <topology evidence="10">Lipid-anchor</topology>
        <orientation evidence="10">Cytoplasmic side</orientation>
    </subcellularLocation>
    <subcellularLocation>
        <location evidence="5">Golgi apparatus membrane</location>
        <topology evidence="5">Lipid-anchor</topology>
        <orientation evidence="5">Cytoplasmic side</orientation>
    </subcellularLocation>
    <text evidence="2">Not localized at the plasma membrane (By similarity). Inhibition of S-geranylgeranyl cysteine formation abolishes membrane location.</text>
</comment>
<comment type="tissue specificity">
    <text evidence="8">Detected in zymogenic cells in the stomach.</text>
</comment>
<comment type="domain">
    <text evidence="4">Switch 1, switch 2 and the interswitch regions are characteristic of Rab GTPases and mediate the interactions with Rab downstream effectors. The switch regions undergo conformational changes upon nucleotide binding which drive interaction with specific sets of effector proteins, with most effectors only binding to GTP-bound Rab.</text>
</comment>
<comment type="similarity">
    <text evidence="9">Belongs to the small GTPase superfamily. Rab family.</text>
</comment>
<gene>
    <name evidence="11" type="primary">Rab26</name>
</gene>
<sequence>MSRKKTPKSKGGSEPATSTLPAAAAATNGPRLAHPRTVRPGPEAPPNGPPQSIRPSLGSTGDFYDVAFKVMLVGDSGVGKTCLLVRFKDGAFLAGTFISTVGIDFRNKVLDVDGMKVKLQIWDTAGQERFRSVTHAYYRDAHALLLLYDITNKDSFDNIQAWLTEIQEYAQQDVVLMLLGNKVDSTQDRVVKREDGEKLAKEYGLPFMETSARTGLNVDLAFTAIAKELKQRSAKAPSEPRFRLHDYVKREGRGVSCCRL</sequence>
<keyword id="KW-0968">Cytoplasmic vesicle</keyword>
<keyword id="KW-0333">Golgi apparatus</keyword>
<keyword id="KW-0342">GTP-binding</keyword>
<keyword id="KW-0378">Hydrolase</keyword>
<keyword id="KW-0449">Lipoprotein</keyword>
<keyword id="KW-0460">Magnesium</keyword>
<keyword id="KW-0472">Membrane</keyword>
<keyword id="KW-0479">Metal-binding</keyword>
<keyword id="KW-0547">Nucleotide-binding</keyword>
<keyword id="KW-0636">Prenylation</keyword>
<keyword id="KW-0653">Protein transport</keyword>
<keyword id="KW-1185">Reference proteome</keyword>
<keyword id="KW-0813">Transport</keyword>
<proteinExistence type="evidence at protein level"/>
<accession>Q504M8</accession>
<name>RAB26_MOUSE</name>
<organism>
    <name type="scientific">Mus musculus</name>
    <name type="common">Mouse</name>
    <dbReference type="NCBI Taxonomy" id="10090"/>
    <lineage>
        <taxon>Eukaryota</taxon>
        <taxon>Metazoa</taxon>
        <taxon>Chordata</taxon>
        <taxon>Craniata</taxon>
        <taxon>Vertebrata</taxon>
        <taxon>Euteleostomi</taxon>
        <taxon>Mammalia</taxon>
        <taxon>Eutheria</taxon>
        <taxon>Euarchontoglires</taxon>
        <taxon>Glires</taxon>
        <taxon>Rodentia</taxon>
        <taxon>Myomorpha</taxon>
        <taxon>Muroidea</taxon>
        <taxon>Muridae</taxon>
        <taxon>Murinae</taxon>
        <taxon>Mus</taxon>
        <taxon>Mus</taxon>
    </lineage>
</organism>